<reference key="1">
    <citation type="journal article" date="2005" name="Science">
        <title>The transcriptional landscape of the mammalian genome.</title>
        <authorList>
            <person name="Carninci P."/>
            <person name="Kasukawa T."/>
            <person name="Katayama S."/>
            <person name="Gough J."/>
            <person name="Frith M.C."/>
            <person name="Maeda N."/>
            <person name="Oyama R."/>
            <person name="Ravasi T."/>
            <person name="Lenhard B."/>
            <person name="Wells C."/>
            <person name="Kodzius R."/>
            <person name="Shimokawa K."/>
            <person name="Bajic V.B."/>
            <person name="Brenner S.E."/>
            <person name="Batalov S."/>
            <person name="Forrest A.R."/>
            <person name="Zavolan M."/>
            <person name="Davis M.J."/>
            <person name="Wilming L.G."/>
            <person name="Aidinis V."/>
            <person name="Allen J.E."/>
            <person name="Ambesi-Impiombato A."/>
            <person name="Apweiler R."/>
            <person name="Aturaliya R.N."/>
            <person name="Bailey T.L."/>
            <person name="Bansal M."/>
            <person name="Baxter L."/>
            <person name="Beisel K.W."/>
            <person name="Bersano T."/>
            <person name="Bono H."/>
            <person name="Chalk A.M."/>
            <person name="Chiu K.P."/>
            <person name="Choudhary V."/>
            <person name="Christoffels A."/>
            <person name="Clutterbuck D.R."/>
            <person name="Crowe M.L."/>
            <person name="Dalla E."/>
            <person name="Dalrymple B.P."/>
            <person name="de Bono B."/>
            <person name="Della Gatta G."/>
            <person name="di Bernardo D."/>
            <person name="Down T."/>
            <person name="Engstrom P."/>
            <person name="Fagiolini M."/>
            <person name="Faulkner G."/>
            <person name="Fletcher C.F."/>
            <person name="Fukushima T."/>
            <person name="Furuno M."/>
            <person name="Futaki S."/>
            <person name="Gariboldi M."/>
            <person name="Georgii-Hemming P."/>
            <person name="Gingeras T.R."/>
            <person name="Gojobori T."/>
            <person name="Green R.E."/>
            <person name="Gustincich S."/>
            <person name="Harbers M."/>
            <person name="Hayashi Y."/>
            <person name="Hensch T.K."/>
            <person name="Hirokawa N."/>
            <person name="Hill D."/>
            <person name="Huminiecki L."/>
            <person name="Iacono M."/>
            <person name="Ikeo K."/>
            <person name="Iwama A."/>
            <person name="Ishikawa T."/>
            <person name="Jakt M."/>
            <person name="Kanapin A."/>
            <person name="Katoh M."/>
            <person name="Kawasawa Y."/>
            <person name="Kelso J."/>
            <person name="Kitamura H."/>
            <person name="Kitano H."/>
            <person name="Kollias G."/>
            <person name="Krishnan S.P."/>
            <person name="Kruger A."/>
            <person name="Kummerfeld S.K."/>
            <person name="Kurochkin I.V."/>
            <person name="Lareau L.F."/>
            <person name="Lazarevic D."/>
            <person name="Lipovich L."/>
            <person name="Liu J."/>
            <person name="Liuni S."/>
            <person name="McWilliam S."/>
            <person name="Madan Babu M."/>
            <person name="Madera M."/>
            <person name="Marchionni L."/>
            <person name="Matsuda H."/>
            <person name="Matsuzawa S."/>
            <person name="Miki H."/>
            <person name="Mignone F."/>
            <person name="Miyake S."/>
            <person name="Morris K."/>
            <person name="Mottagui-Tabar S."/>
            <person name="Mulder N."/>
            <person name="Nakano N."/>
            <person name="Nakauchi H."/>
            <person name="Ng P."/>
            <person name="Nilsson R."/>
            <person name="Nishiguchi S."/>
            <person name="Nishikawa S."/>
            <person name="Nori F."/>
            <person name="Ohara O."/>
            <person name="Okazaki Y."/>
            <person name="Orlando V."/>
            <person name="Pang K.C."/>
            <person name="Pavan W.J."/>
            <person name="Pavesi G."/>
            <person name="Pesole G."/>
            <person name="Petrovsky N."/>
            <person name="Piazza S."/>
            <person name="Reed J."/>
            <person name="Reid J.F."/>
            <person name="Ring B.Z."/>
            <person name="Ringwald M."/>
            <person name="Rost B."/>
            <person name="Ruan Y."/>
            <person name="Salzberg S.L."/>
            <person name="Sandelin A."/>
            <person name="Schneider C."/>
            <person name="Schoenbach C."/>
            <person name="Sekiguchi K."/>
            <person name="Semple C.A."/>
            <person name="Seno S."/>
            <person name="Sessa L."/>
            <person name="Sheng Y."/>
            <person name="Shibata Y."/>
            <person name="Shimada H."/>
            <person name="Shimada K."/>
            <person name="Silva D."/>
            <person name="Sinclair B."/>
            <person name="Sperling S."/>
            <person name="Stupka E."/>
            <person name="Sugiura K."/>
            <person name="Sultana R."/>
            <person name="Takenaka Y."/>
            <person name="Taki K."/>
            <person name="Tammoja K."/>
            <person name="Tan S.L."/>
            <person name="Tang S."/>
            <person name="Taylor M.S."/>
            <person name="Tegner J."/>
            <person name="Teichmann S.A."/>
            <person name="Ueda H.R."/>
            <person name="van Nimwegen E."/>
            <person name="Verardo R."/>
            <person name="Wei C.L."/>
            <person name="Yagi K."/>
            <person name="Yamanishi H."/>
            <person name="Zabarovsky E."/>
            <person name="Zhu S."/>
            <person name="Zimmer A."/>
            <person name="Hide W."/>
            <person name="Bult C."/>
            <person name="Grimmond S.M."/>
            <person name="Teasdale R.D."/>
            <person name="Liu E.T."/>
            <person name="Brusic V."/>
            <person name="Quackenbush J."/>
            <person name="Wahlestedt C."/>
            <person name="Mattick J.S."/>
            <person name="Hume D.A."/>
            <person name="Kai C."/>
            <person name="Sasaki D."/>
            <person name="Tomaru Y."/>
            <person name="Fukuda S."/>
            <person name="Kanamori-Katayama M."/>
            <person name="Suzuki M."/>
            <person name="Aoki J."/>
            <person name="Arakawa T."/>
            <person name="Iida J."/>
            <person name="Imamura K."/>
            <person name="Itoh M."/>
            <person name="Kato T."/>
            <person name="Kawaji H."/>
            <person name="Kawagashira N."/>
            <person name="Kawashima T."/>
            <person name="Kojima M."/>
            <person name="Kondo S."/>
            <person name="Konno H."/>
            <person name="Nakano K."/>
            <person name="Ninomiya N."/>
            <person name="Nishio T."/>
            <person name="Okada M."/>
            <person name="Plessy C."/>
            <person name="Shibata K."/>
            <person name="Shiraki T."/>
            <person name="Suzuki S."/>
            <person name="Tagami M."/>
            <person name="Waki K."/>
            <person name="Watahiki A."/>
            <person name="Okamura-Oho Y."/>
            <person name="Suzuki H."/>
            <person name="Kawai J."/>
            <person name="Hayashizaki Y."/>
        </authorList>
    </citation>
    <scope>NUCLEOTIDE SEQUENCE [LARGE SCALE MRNA] (ISOFORM 1)</scope>
    <source>
        <strain>C57BL/6J</strain>
        <tissue>Cerebellum</tissue>
    </source>
</reference>
<reference key="2">
    <citation type="journal article" date="2009" name="PLoS Biol.">
        <title>Lineage-specific biology revealed by a finished genome assembly of the mouse.</title>
        <authorList>
            <person name="Church D.M."/>
            <person name="Goodstadt L."/>
            <person name="Hillier L.W."/>
            <person name="Zody M.C."/>
            <person name="Goldstein S."/>
            <person name="She X."/>
            <person name="Bult C.J."/>
            <person name="Agarwala R."/>
            <person name="Cherry J.L."/>
            <person name="DiCuccio M."/>
            <person name="Hlavina W."/>
            <person name="Kapustin Y."/>
            <person name="Meric P."/>
            <person name="Maglott D."/>
            <person name="Birtle Z."/>
            <person name="Marques A.C."/>
            <person name="Graves T."/>
            <person name="Zhou S."/>
            <person name="Teague B."/>
            <person name="Potamousis K."/>
            <person name="Churas C."/>
            <person name="Place M."/>
            <person name="Herschleb J."/>
            <person name="Runnheim R."/>
            <person name="Forrest D."/>
            <person name="Amos-Landgraf J."/>
            <person name="Schwartz D.C."/>
            <person name="Cheng Z."/>
            <person name="Lindblad-Toh K."/>
            <person name="Eichler E.E."/>
            <person name="Ponting C.P."/>
        </authorList>
    </citation>
    <scope>NUCLEOTIDE SEQUENCE [LARGE SCALE GENOMIC DNA]</scope>
    <source>
        <strain>C57BL/6J</strain>
    </source>
</reference>
<reference key="3">
    <citation type="journal article" date="2004" name="Genome Res.">
        <title>The status, quality, and expansion of the NIH full-length cDNA project: the Mammalian Gene Collection (MGC).</title>
        <authorList>
            <consortium name="The MGC Project Team"/>
        </authorList>
    </citation>
    <scope>NUCLEOTIDE SEQUENCE [LARGE SCALE MRNA] (ISOFORM 2)</scope>
    <source>
        <strain>C57BL/6J</strain>
        <tissue>Brain</tissue>
    </source>
</reference>
<reference key="4">
    <citation type="journal article" date="2002" name="DNA Res.">
        <title>Prediction of the coding sequences of mouse homologues of KIAA gene: I. The complete nucleotide sequences of 100 mouse KIAA-homologous cDNAs identified by screening of terminal sequences of cDNA clones randomly sampled from size-fractionated libraries.</title>
        <authorList>
            <person name="Okazaki N."/>
            <person name="Kikuno R."/>
            <person name="Ohara R."/>
            <person name="Inamoto S."/>
            <person name="Hara Y."/>
            <person name="Nagase T."/>
            <person name="Ohara O."/>
            <person name="Koga H."/>
        </authorList>
    </citation>
    <scope>NUCLEOTIDE SEQUENCE [LARGE SCALE MRNA] OF 354-1020 (ISOFORM 1)</scope>
    <source>
        <tissue>Brain</tissue>
    </source>
</reference>
<reference key="5">
    <citation type="journal article" date="2004" name="Mol. Cell. Proteomics">
        <title>Phosphoproteomic analysis of the developing mouse brain.</title>
        <authorList>
            <person name="Ballif B.A."/>
            <person name="Villen J."/>
            <person name="Beausoleil S.A."/>
            <person name="Schwartz D."/>
            <person name="Gygi S.P."/>
        </authorList>
    </citation>
    <scope>IDENTIFICATION BY MASS SPECTROMETRY [LARGE SCALE ANALYSIS]</scope>
    <source>
        <tissue>Embryonic brain</tissue>
    </source>
</reference>
<reference key="6">
    <citation type="journal article" date="2009" name="Immunity">
        <title>The phagosomal proteome in interferon-gamma-activated macrophages.</title>
        <authorList>
            <person name="Trost M."/>
            <person name="English L."/>
            <person name="Lemieux S."/>
            <person name="Courcelles M."/>
            <person name="Desjardins M."/>
            <person name="Thibault P."/>
        </authorList>
    </citation>
    <scope>PHOSPHORYLATION [LARGE SCALE ANALYSIS] AT SER-696</scope>
    <scope>IDENTIFICATION BY MASS SPECTROMETRY [LARGE SCALE ANALYSIS]</scope>
</reference>
<reference key="7">
    <citation type="journal article" date="2010" name="Cell">
        <title>A tissue-specific atlas of mouse protein phosphorylation and expression.</title>
        <authorList>
            <person name="Huttlin E.L."/>
            <person name="Jedrychowski M.P."/>
            <person name="Elias J.E."/>
            <person name="Goswami T."/>
            <person name="Rad R."/>
            <person name="Beausoleil S.A."/>
            <person name="Villen J."/>
            <person name="Haas W."/>
            <person name="Sowa M.E."/>
            <person name="Gygi S.P."/>
        </authorList>
    </citation>
    <scope>PHOSPHORYLATION [LARGE SCALE ANALYSIS] AT SER-601</scope>
    <scope>IDENTIFICATION BY MASS SPECTROMETRY [LARGE SCALE ANALYSIS]</scope>
    <source>
        <tissue>Brain</tissue>
        <tissue>Liver</tissue>
        <tissue>Spleen</tissue>
    </source>
</reference>
<reference key="8">
    <citation type="journal article" date="2010" name="Proc. Natl. Acad. Sci. U.S.A.">
        <title>FRMD4A regulates epithelial polarity by connecting Arf6 activation with the PAR complex.</title>
        <authorList>
            <person name="Ikenouchi J."/>
            <person name="Umeda M."/>
        </authorList>
    </citation>
    <scope>SUBCELLULAR LOCATION</scope>
    <scope>INTERACTION WITH CYTH1; CYTH2; CYTH3 AND PARD3</scope>
    <scope>FUNCTION</scope>
</reference>
<protein>
    <recommendedName>
        <fullName>FERM domain-containing protein 4A</fullName>
    </recommendedName>
</protein>
<proteinExistence type="evidence at protein level"/>
<evidence type="ECO:0000250" key="1"/>
<evidence type="ECO:0000250" key="2">
    <source>
        <dbReference type="UniProtKB" id="Q9P2Q2"/>
    </source>
</evidence>
<evidence type="ECO:0000255" key="3"/>
<evidence type="ECO:0000255" key="4">
    <source>
        <dbReference type="PROSITE-ProRule" id="PRU00084"/>
    </source>
</evidence>
<evidence type="ECO:0000256" key="5">
    <source>
        <dbReference type="SAM" id="MobiDB-lite"/>
    </source>
</evidence>
<evidence type="ECO:0000269" key="6">
    <source>
    </source>
</evidence>
<evidence type="ECO:0000303" key="7">
    <source>
    </source>
</evidence>
<evidence type="ECO:0000305" key="8"/>
<evidence type="ECO:0007744" key="9">
    <source>
    </source>
</evidence>
<evidence type="ECO:0007744" key="10">
    <source>
    </source>
</evidence>
<gene>
    <name type="primary">Frmd4a</name>
    <name type="synonym">Frmd4</name>
    <name type="synonym">Kiaa1294</name>
</gene>
<name>FRM4A_MOUSE</name>
<organism>
    <name type="scientific">Mus musculus</name>
    <name type="common">Mouse</name>
    <dbReference type="NCBI Taxonomy" id="10090"/>
    <lineage>
        <taxon>Eukaryota</taxon>
        <taxon>Metazoa</taxon>
        <taxon>Chordata</taxon>
        <taxon>Craniata</taxon>
        <taxon>Vertebrata</taxon>
        <taxon>Euteleostomi</taxon>
        <taxon>Mammalia</taxon>
        <taxon>Eutheria</taxon>
        <taxon>Euarchontoglires</taxon>
        <taxon>Glires</taxon>
        <taxon>Rodentia</taxon>
        <taxon>Myomorpha</taxon>
        <taxon>Muroidea</taxon>
        <taxon>Muridae</taxon>
        <taxon>Murinae</taxon>
        <taxon>Mus</taxon>
        <taxon>Mus</taxon>
    </lineage>
</organism>
<comment type="function">
    <text evidence="2 6">Scaffolding protein that regulates epithelial cell polarity by connecting ARF6 activation with the PAR3 complex (PubMed:20080746). Plays a redundant role with FRMD4B in epithelial polarization (PubMed:20080746). May regulate MAPT secretion by activating ARF6-signaling (By similarity).</text>
</comment>
<comment type="subunit">
    <text evidence="6">Interacts (via coiled-coil domain) with CYTH1 (via coiled-coil domain) (PubMed:20080746). Interacts with PARD3 (via coiled-coil domain) (PubMed:20080746). Found in a complex with PARD3, CYTH1 and FRMD4A (PubMed:20080746). Interacts with CYTH2 (PubMed:20080746). Interacts with CYTH3 (PubMed:20080746).</text>
</comment>
<comment type="subcellular location">
    <subcellularLocation>
        <location evidence="1">Cytoplasm</location>
        <location evidence="1">Cytoskeleton</location>
    </subcellularLocation>
    <subcellularLocation>
        <location evidence="6">Cell junction</location>
        <location evidence="6">Adherens junction</location>
    </subcellularLocation>
    <subcellularLocation>
        <location evidence="6">Cell junction</location>
        <location evidence="6">Tight junction</location>
    </subcellularLocation>
    <text evidence="6">Colocalized with CYTH1 at adherens junction and tight junction (PubMed:20080746). Colocalized with PARD3 during the process of epithelial polarization (PubMed:20080746).</text>
</comment>
<comment type="alternative products">
    <event type="alternative splicing"/>
    <isoform>
        <id>Q8BIE6-1</id>
        <name>1</name>
        <sequence type="displayed"/>
    </isoform>
    <isoform>
        <id>Q8BIE6-2</id>
        <name>2</name>
        <sequence type="described" ref="VSP_035378 VSP_019592"/>
    </isoform>
</comment>
<comment type="sequence caution" evidence="8">
    <conflict type="erroneous initiation">
        <sequence resource="EMBL-CDS" id="AAH58672"/>
    </conflict>
</comment>
<comment type="sequence caution" evidence="8">
    <conflict type="erroneous gene model prediction">
        <sequence resource="EMBL-CDS" id="CAM46015"/>
    </conflict>
</comment>
<comment type="sequence caution" evidence="8">
    <conflict type="erroneous gene model prediction">
        <sequence resource="EMBL-CDS" id="CAM46271"/>
    </conflict>
</comment>
<keyword id="KW-0025">Alternative splicing</keyword>
<keyword id="KW-0965">Cell junction</keyword>
<keyword id="KW-0175">Coiled coil</keyword>
<keyword id="KW-0963">Cytoplasm</keyword>
<keyword id="KW-0206">Cytoskeleton</keyword>
<keyword id="KW-0597">Phosphoprotein</keyword>
<keyword id="KW-1185">Reference proteome</keyword>
<keyword id="KW-0796">Tight junction</keyword>
<accession>Q8BIE6</accession>
<accession>B1AXK1</accession>
<accession>B1AXK2</accession>
<accession>Q6PDJ4</accession>
<accession>Q8CHA6</accession>
<dbReference type="EMBL" id="AK082365">
    <property type="protein sequence ID" value="BAC38478.1"/>
    <property type="molecule type" value="mRNA"/>
</dbReference>
<dbReference type="EMBL" id="AL807832">
    <property type="protein sequence ID" value="CAM46014.1"/>
    <property type="molecule type" value="Genomic_DNA"/>
</dbReference>
<dbReference type="EMBL" id="AL928947">
    <property type="protein sequence ID" value="CAM46014.1"/>
    <property type="status" value="JOINED"/>
    <property type="molecule type" value="Genomic_DNA"/>
</dbReference>
<dbReference type="EMBL" id="AL807832">
    <property type="protein sequence ID" value="CAM46015.1"/>
    <property type="status" value="ALT_SEQ"/>
    <property type="molecule type" value="Genomic_DNA"/>
</dbReference>
<dbReference type="EMBL" id="AL928947">
    <property type="protein sequence ID" value="CAM46015.1"/>
    <property type="status" value="JOINED"/>
    <property type="molecule type" value="Genomic_DNA"/>
</dbReference>
<dbReference type="EMBL" id="AL928947">
    <property type="protein sequence ID" value="CAM46270.1"/>
    <property type="molecule type" value="Genomic_DNA"/>
</dbReference>
<dbReference type="EMBL" id="AL807832">
    <property type="protein sequence ID" value="CAM46270.1"/>
    <property type="status" value="JOINED"/>
    <property type="molecule type" value="Genomic_DNA"/>
</dbReference>
<dbReference type="EMBL" id="AL928947">
    <property type="protein sequence ID" value="CAM46271.1"/>
    <property type="status" value="ALT_SEQ"/>
    <property type="molecule type" value="Genomic_DNA"/>
</dbReference>
<dbReference type="EMBL" id="AL807832">
    <property type="protein sequence ID" value="CAM46271.1"/>
    <property type="status" value="JOINED"/>
    <property type="molecule type" value="Genomic_DNA"/>
</dbReference>
<dbReference type="EMBL" id="BC058672">
    <property type="protein sequence ID" value="AAH58672.1"/>
    <property type="status" value="ALT_INIT"/>
    <property type="molecule type" value="mRNA"/>
</dbReference>
<dbReference type="EMBL" id="AB093292">
    <property type="protein sequence ID" value="BAC41475.1"/>
    <property type="molecule type" value="mRNA"/>
</dbReference>
<dbReference type="CCDS" id="CCDS15656.2">
    <molecule id="Q8BIE6-2"/>
</dbReference>
<dbReference type="CCDS" id="CCDS50488.1">
    <molecule id="Q8BIE6-1"/>
</dbReference>
<dbReference type="RefSeq" id="NP_001171314.1">
    <molecule id="Q8BIE6-1"/>
    <property type="nucleotide sequence ID" value="NM_001177843.1"/>
</dbReference>
<dbReference type="RefSeq" id="NP_766063.3">
    <molecule id="Q8BIE6-2"/>
    <property type="nucleotide sequence ID" value="NM_172475.3"/>
</dbReference>
<dbReference type="RefSeq" id="XP_006497503.1">
    <property type="nucleotide sequence ID" value="XM_006497440.1"/>
</dbReference>
<dbReference type="RefSeq" id="XP_006497504.1">
    <property type="nucleotide sequence ID" value="XM_006497441.1"/>
</dbReference>
<dbReference type="RefSeq" id="XP_006497505.1">
    <property type="nucleotide sequence ID" value="XM_006497442.2"/>
</dbReference>
<dbReference type="RefSeq" id="XP_030105029.1">
    <molecule id="Q8BIE6-1"/>
    <property type="nucleotide sequence ID" value="XM_030249169.2"/>
</dbReference>
<dbReference type="SMR" id="Q8BIE6"/>
<dbReference type="BioGRID" id="229099">
    <property type="interactions" value="5"/>
</dbReference>
<dbReference type="FunCoup" id="Q8BIE6">
    <property type="interactions" value="421"/>
</dbReference>
<dbReference type="IntAct" id="Q8BIE6">
    <property type="interactions" value="1"/>
</dbReference>
<dbReference type="MINT" id="Q8BIE6"/>
<dbReference type="STRING" id="10090.ENSMUSP00000089079"/>
<dbReference type="GlyGen" id="Q8BIE6">
    <property type="glycosylation" value="4 sites, 1 N-linked glycan (1 site), 1 O-linked glycan (2 sites)"/>
</dbReference>
<dbReference type="iPTMnet" id="Q8BIE6"/>
<dbReference type="PhosphoSitePlus" id="Q8BIE6"/>
<dbReference type="jPOST" id="Q8BIE6"/>
<dbReference type="PaxDb" id="10090-ENSMUSP00000075172"/>
<dbReference type="ProteomicsDB" id="271803">
    <molecule id="Q8BIE6-1"/>
</dbReference>
<dbReference type="ProteomicsDB" id="271804">
    <molecule id="Q8BIE6-2"/>
</dbReference>
<dbReference type="Pumba" id="Q8BIE6"/>
<dbReference type="Antibodypedia" id="50861">
    <property type="antibodies" value="42 antibodies from 9 providers"/>
</dbReference>
<dbReference type="DNASU" id="209630"/>
<dbReference type="Ensembl" id="ENSMUST00000075767.14">
    <molecule id="Q8BIE6-1"/>
    <property type="protein sequence ID" value="ENSMUSP00000075172.8"/>
    <property type="gene ID" value="ENSMUSG00000026657.18"/>
</dbReference>
<dbReference type="Ensembl" id="ENSMUST00000091497.11">
    <molecule id="Q8BIE6-2"/>
    <property type="protein sequence ID" value="ENSMUSP00000089079.5"/>
    <property type="gene ID" value="ENSMUSG00000026657.18"/>
</dbReference>
<dbReference type="GeneID" id="209630"/>
<dbReference type="KEGG" id="mmu:209630"/>
<dbReference type="UCSC" id="uc008ieo.2">
    <molecule id="Q8BIE6-2"/>
    <property type="organism name" value="mouse"/>
</dbReference>
<dbReference type="UCSC" id="uc008ies.2">
    <molecule id="Q8BIE6-1"/>
    <property type="organism name" value="mouse"/>
</dbReference>
<dbReference type="AGR" id="MGI:1919850"/>
<dbReference type="CTD" id="55691"/>
<dbReference type="MGI" id="MGI:1919850">
    <property type="gene designation" value="Frmd4a"/>
</dbReference>
<dbReference type="VEuPathDB" id="HostDB:ENSMUSG00000026657"/>
<dbReference type="eggNOG" id="KOG3529">
    <property type="taxonomic scope" value="Eukaryota"/>
</dbReference>
<dbReference type="GeneTree" id="ENSGT01020000230354"/>
<dbReference type="HOGENOM" id="CLU_003623_2_0_1"/>
<dbReference type="InParanoid" id="Q8BIE6"/>
<dbReference type="OMA" id="HILTWRT"/>
<dbReference type="OrthoDB" id="10063592at2759"/>
<dbReference type="PhylomeDB" id="Q8BIE6"/>
<dbReference type="TreeFam" id="TF328984"/>
<dbReference type="BioGRID-ORCS" id="209630">
    <property type="hits" value="2 hits in 77 CRISPR screens"/>
</dbReference>
<dbReference type="ChiTaRS" id="Frmd4a">
    <property type="organism name" value="mouse"/>
</dbReference>
<dbReference type="PRO" id="PR:Q8BIE6"/>
<dbReference type="Proteomes" id="UP000000589">
    <property type="component" value="Chromosome 2"/>
</dbReference>
<dbReference type="RNAct" id="Q8BIE6">
    <property type="molecule type" value="protein"/>
</dbReference>
<dbReference type="Bgee" id="ENSMUSG00000026657">
    <property type="expression patterns" value="Expressed in manus and 232 other cell types or tissues"/>
</dbReference>
<dbReference type="ExpressionAtlas" id="Q8BIE6">
    <property type="expression patterns" value="baseline and differential"/>
</dbReference>
<dbReference type="GO" id="GO:0005912">
    <property type="term" value="C:adherens junction"/>
    <property type="evidence" value="ECO:0007669"/>
    <property type="project" value="UniProtKB-SubCell"/>
</dbReference>
<dbReference type="GO" id="GO:0005923">
    <property type="term" value="C:bicellular tight junction"/>
    <property type="evidence" value="ECO:0000314"/>
    <property type="project" value="MGI"/>
</dbReference>
<dbReference type="GO" id="GO:0005737">
    <property type="term" value="C:cytoplasm"/>
    <property type="evidence" value="ECO:0007669"/>
    <property type="project" value="UniProtKB-KW"/>
</dbReference>
<dbReference type="GO" id="GO:0005856">
    <property type="term" value="C:cytoskeleton"/>
    <property type="evidence" value="ECO:0007669"/>
    <property type="project" value="UniProtKB-SubCell"/>
</dbReference>
<dbReference type="GO" id="GO:0030674">
    <property type="term" value="F:protein-macromolecule adaptor activity"/>
    <property type="evidence" value="ECO:0000353"/>
    <property type="project" value="MGI"/>
</dbReference>
<dbReference type="GO" id="GO:0090162">
    <property type="term" value="P:establishment of epithelial cell polarity"/>
    <property type="evidence" value="ECO:0000316"/>
    <property type="project" value="MGI"/>
</dbReference>
<dbReference type="GO" id="GO:0050709">
    <property type="term" value="P:negative regulation of protein secretion"/>
    <property type="evidence" value="ECO:0000315"/>
    <property type="project" value="UniProtKB"/>
</dbReference>
<dbReference type="GO" id="GO:0050714">
    <property type="term" value="P:positive regulation of protein secretion"/>
    <property type="evidence" value="ECO:0007669"/>
    <property type="project" value="Ensembl"/>
</dbReference>
<dbReference type="CDD" id="cd14473">
    <property type="entry name" value="FERM_B-lobe"/>
    <property type="match status" value="1"/>
</dbReference>
<dbReference type="CDD" id="cd13191">
    <property type="entry name" value="FERM_C_FRMD4A_FRMD4B"/>
    <property type="match status" value="1"/>
</dbReference>
<dbReference type="CDD" id="cd17200">
    <property type="entry name" value="FERM_F1_FRMD4B"/>
    <property type="match status" value="1"/>
</dbReference>
<dbReference type="FunFam" id="1.20.80.10:FF:000008">
    <property type="entry name" value="FERM domain containing 4A"/>
    <property type="match status" value="1"/>
</dbReference>
<dbReference type="FunFam" id="3.10.20.90:FF:000019">
    <property type="entry name" value="FERM domain containing 4A"/>
    <property type="match status" value="1"/>
</dbReference>
<dbReference type="FunFam" id="2.30.29.30:FF:000022">
    <property type="entry name" value="Putative FERM domain-containing protein 4A"/>
    <property type="match status" value="1"/>
</dbReference>
<dbReference type="Gene3D" id="1.20.80.10">
    <property type="match status" value="1"/>
</dbReference>
<dbReference type="Gene3D" id="3.10.20.90">
    <property type="entry name" value="Phosphatidylinositol 3-kinase Catalytic Subunit, Chain A, domain 1"/>
    <property type="match status" value="1"/>
</dbReference>
<dbReference type="Gene3D" id="2.30.29.30">
    <property type="entry name" value="Pleckstrin-homology domain (PH domain)/Phosphotyrosine-binding domain (PTB)"/>
    <property type="match status" value="1"/>
</dbReference>
<dbReference type="InterPro" id="IPR019749">
    <property type="entry name" value="Band_41_domain"/>
</dbReference>
<dbReference type="InterPro" id="IPR021774">
    <property type="entry name" value="CUPID"/>
</dbReference>
<dbReference type="InterPro" id="IPR014352">
    <property type="entry name" value="FERM/acyl-CoA-bd_prot_sf"/>
</dbReference>
<dbReference type="InterPro" id="IPR035963">
    <property type="entry name" value="FERM_2"/>
</dbReference>
<dbReference type="InterPro" id="IPR019748">
    <property type="entry name" value="FERM_central"/>
</dbReference>
<dbReference type="InterPro" id="IPR019747">
    <property type="entry name" value="FERM_CS"/>
</dbReference>
<dbReference type="InterPro" id="IPR000299">
    <property type="entry name" value="FERM_domain"/>
</dbReference>
<dbReference type="InterPro" id="IPR018979">
    <property type="entry name" value="FERM_N"/>
</dbReference>
<dbReference type="InterPro" id="IPR018980">
    <property type="entry name" value="FERM_PH-like_C"/>
</dbReference>
<dbReference type="InterPro" id="IPR047176">
    <property type="entry name" value="FRMD4A/B"/>
</dbReference>
<dbReference type="InterPro" id="IPR041785">
    <property type="entry name" value="FRMD4A/B_FERM_C"/>
</dbReference>
<dbReference type="InterPro" id="IPR011993">
    <property type="entry name" value="PH-like_dom_sf"/>
</dbReference>
<dbReference type="InterPro" id="IPR029071">
    <property type="entry name" value="Ubiquitin-like_domsf"/>
</dbReference>
<dbReference type="PANTHER" id="PTHR46079">
    <property type="entry name" value="FERM DOMAIN-CONTAINING PROTEIN 4"/>
    <property type="match status" value="1"/>
</dbReference>
<dbReference type="PANTHER" id="PTHR46079:SF3">
    <property type="entry name" value="FERM DOMAIN-CONTAINING PROTEIN 4A"/>
    <property type="match status" value="1"/>
</dbReference>
<dbReference type="Pfam" id="PF11819">
    <property type="entry name" value="CUPID"/>
    <property type="match status" value="1"/>
</dbReference>
<dbReference type="Pfam" id="PF09380">
    <property type="entry name" value="FERM_C"/>
    <property type="match status" value="1"/>
</dbReference>
<dbReference type="Pfam" id="PF00373">
    <property type="entry name" value="FERM_M"/>
    <property type="match status" value="1"/>
</dbReference>
<dbReference type="Pfam" id="PF09379">
    <property type="entry name" value="FERM_N"/>
    <property type="match status" value="1"/>
</dbReference>
<dbReference type="PRINTS" id="PR00935">
    <property type="entry name" value="BAND41"/>
</dbReference>
<dbReference type="SMART" id="SM00295">
    <property type="entry name" value="B41"/>
    <property type="match status" value="1"/>
</dbReference>
<dbReference type="SMART" id="SM01196">
    <property type="entry name" value="FERM_C"/>
    <property type="match status" value="1"/>
</dbReference>
<dbReference type="SUPFAM" id="SSF50729">
    <property type="entry name" value="PH domain-like"/>
    <property type="match status" value="1"/>
</dbReference>
<dbReference type="SUPFAM" id="SSF47031">
    <property type="entry name" value="Second domain of FERM"/>
    <property type="match status" value="1"/>
</dbReference>
<dbReference type="SUPFAM" id="SSF54236">
    <property type="entry name" value="Ubiquitin-like"/>
    <property type="match status" value="1"/>
</dbReference>
<dbReference type="PROSITE" id="PS00660">
    <property type="entry name" value="FERM_1"/>
    <property type="match status" value="1"/>
</dbReference>
<dbReference type="PROSITE" id="PS00661">
    <property type="entry name" value="FERM_2"/>
    <property type="match status" value="1"/>
</dbReference>
<dbReference type="PROSITE" id="PS50057">
    <property type="entry name" value="FERM_3"/>
    <property type="match status" value="1"/>
</dbReference>
<feature type="chain" id="PRO_0000219445" description="FERM domain-containing protein 4A">
    <location>
        <begin position="1"/>
        <end position="1020"/>
    </location>
</feature>
<feature type="domain" description="FERM" evidence="4">
    <location>
        <begin position="5"/>
        <end position="307"/>
    </location>
</feature>
<feature type="region of interest" description="Necessary for interaction with CYTH1" evidence="6">
    <location>
        <begin position="343"/>
        <end position="405"/>
    </location>
</feature>
<feature type="region of interest" description="Disordered" evidence="5">
    <location>
        <begin position="351"/>
        <end position="371"/>
    </location>
</feature>
<feature type="region of interest" description="Disordered" evidence="5">
    <location>
        <begin position="538"/>
        <end position="665"/>
    </location>
</feature>
<feature type="region of interest" description="Necessary for tight junction and adherens junction localization; Requires for interaction with PARD3" evidence="6">
    <location>
        <begin position="565"/>
        <end position="920"/>
    </location>
</feature>
<feature type="region of interest" description="Disordered" evidence="5">
    <location>
        <begin position="698"/>
        <end position="741"/>
    </location>
</feature>
<feature type="region of interest" description="Disordered" evidence="5">
    <location>
        <begin position="757"/>
        <end position="810"/>
    </location>
</feature>
<feature type="region of interest" description="Disordered" evidence="5">
    <location>
        <begin position="862"/>
        <end position="949"/>
    </location>
</feature>
<feature type="region of interest" description="Disordered" evidence="5">
    <location>
        <begin position="961"/>
        <end position="1020"/>
    </location>
</feature>
<feature type="coiled-coil region" evidence="3">
    <location>
        <begin position="367"/>
        <end position="401"/>
    </location>
</feature>
<feature type="compositionally biased region" description="Low complexity" evidence="5">
    <location>
        <begin position="351"/>
        <end position="367"/>
    </location>
</feature>
<feature type="compositionally biased region" description="Polar residues" evidence="5">
    <location>
        <begin position="542"/>
        <end position="551"/>
    </location>
</feature>
<feature type="compositionally biased region" description="Pro residues" evidence="5">
    <location>
        <begin position="556"/>
        <end position="572"/>
    </location>
</feature>
<feature type="compositionally biased region" description="Basic residues" evidence="5">
    <location>
        <begin position="609"/>
        <end position="624"/>
    </location>
</feature>
<feature type="compositionally biased region" description="Polar residues" evidence="5">
    <location>
        <begin position="626"/>
        <end position="658"/>
    </location>
</feature>
<feature type="compositionally biased region" description="Low complexity" evidence="5">
    <location>
        <begin position="773"/>
        <end position="796"/>
    </location>
</feature>
<feature type="compositionally biased region" description="Basic and acidic residues" evidence="5">
    <location>
        <begin position="893"/>
        <end position="910"/>
    </location>
</feature>
<feature type="compositionally biased region" description="Low complexity" evidence="5">
    <location>
        <begin position="927"/>
        <end position="947"/>
    </location>
</feature>
<feature type="compositionally biased region" description="Polar residues" evidence="5">
    <location>
        <begin position="967"/>
        <end position="981"/>
    </location>
</feature>
<feature type="compositionally biased region" description="Polar residues" evidence="5">
    <location>
        <begin position="994"/>
        <end position="1004"/>
    </location>
</feature>
<feature type="compositionally biased region" description="Polar residues" evidence="5">
    <location>
        <begin position="1011"/>
        <end position="1020"/>
    </location>
</feature>
<feature type="modified residue" description="Phosphoserine" evidence="2">
    <location>
        <position position="515"/>
    </location>
</feature>
<feature type="modified residue" description="Phosphoserine" evidence="2">
    <location>
        <position position="590"/>
    </location>
</feature>
<feature type="modified residue" description="Phosphoserine" evidence="10">
    <location>
        <position position="601"/>
    </location>
</feature>
<feature type="modified residue" description="Phosphoserine" evidence="2">
    <location>
        <position position="666"/>
    </location>
</feature>
<feature type="modified residue" description="Phosphoserine" evidence="9">
    <location>
        <position position="696"/>
    </location>
</feature>
<feature type="modified residue" description="Phosphoserine" evidence="2">
    <location>
        <position position="785"/>
    </location>
</feature>
<feature type="modified residue" description="Phosphoserine" evidence="2">
    <location>
        <position position="854"/>
    </location>
</feature>
<feature type="modified residue" description="Phosphoserine" evidence="2">
    <location>
        <position position="882"/>
    </location>
</feature>
<feature type="splice variant" id="VSP_035378" description="In isoform 2." evidence="7">
    <original>M</original>
    <variation>MEGLLSPMRTKM</variation>
    <location>
        <position position="1"/>
    </location>
</feature>
<feature type="splice variant" id="VSP_019592" description="In isoform 2." evidence="7">
    <original>EATENSPIMDGSESPTHQSTDE</original>
    <variation>SYSDSCFLDSSLYPELADVQWYGQEKAKPGTLV</variation>
    <location>
        <begin position="999"/>
        <end position="1020"/>
    </location>
</feature>
<feature type="sequence conflict" description="In Ref. 1; BAC38478." evidence="8" ref="1">
    <original>E</original>
    <variation>G</variation>
    <location>
        <position position="758"/>
    </location>
</feature>
<sequence length="1020" mass="113879">MTEGRRCQVHLLDDRKLELLVQPKLLAKELLDLVASHFNLKEKEYFGIAFTDETGHLNWLQLDRRVLEHDFPKKSGPVVLYFCVRFYIESISYLKDNATIELFFLNAKSCIYKELIDVDSEVVFELASYILQEAKGDFSSNEVVRSDLKKLPALPTQALKEHPSLAYCEDRVIEYYKKLNGQTRGQAIVNYMSIVESLPTYGVHYYAVKDKQGIPWWLGLSYKGIFQYDYHDKVKPRKIFQWRQLENLYFREKKFSVEVHDPRRASVTRRTFGHSGIAVHTWYACPALIKSIWAMAISQHQFYLDRKQSKSKIHAARSLSEIAIDLTETGTLKTSKLANMGSKGKIISGSSGSLLSSGSQESDSSQSAKKDMLAALKSRQEALEETLRQRLEELKRLCLREAELTGKLPVEYPLDPGEEPPIVRRRIGTAFKLDEQKILPKGEEAELERLEREFAIQSQITEAARRLASDPNVSKKLKKQRKTSYLNALKKLQEIENAINENRIKSGKKPTQRASLVIDDGNIASEDSSLSDALVLEDEDSQVTSTISPLQSPHKGLPPRPPSSHNRPPPPQSLEGLRQLHYHRTDYDKSPLKPKMWSESSLDEPYEKVKKRSSHGHSSSHKRFPSTGSCTEAGVSSSLQNSPIRSLPHWNSQSSMPSTPDLRVRSPHYVHSTRSVDISPTRLHSLALHFRHRSSSLESQGKLLGSENDTGSPDFYTPRTRSSNGSDPMDDCSSCTSHSSSEHYYPAQMNANYSTLAEDSPSKARQRQRQRQRAAGALGSASSGSMPNLAARSGAASTGGGVYLHSQSQPSSQYRIKEYPLYIEGSATPVVVRSLESDQEGHYSVKAQFKTSNSYTAGGLFKESWRGGGDEGDAGRLTPSRSQILRTPSLGRDGAHDKGSGRAAVSDELRQWYQRSTASHKEHSRLSHTSSTSSDSGSQYSTSSQSTFVAHSRVTRMPQMCKATSAALPQSQRSSTPSSEIGATPPSSPHHILTWQTGEATENSPIMDGSESPTHQSTDE</sequence>